<dbReference type="EC" id="2.8.1.6" evidence="1"/>
<dbReference type="EMBL" id="CP001173">
    <property type="protein sequence ID" value="ACI28077.1"/>
    <property type="molecule type" value="Genomic_DNA"/>
</dbReference>
<dbReference type="RefSeq" id="WP_001155604.1">
    <property type="nucleotide sequence ID" value="NC_011333.1"/>
</dbReference>
<dbReference type="SMR" id="B5Z928"/>
<dbReference type="KEGG" id="hpg:HPG27_1329"/>
<dbReference type="HOGENOM" id="CLU_033172_2_1_7"/>
<dbReference type="UniPathway" id="UPA00078">
    <property type="reaction ID" value="UER00162"/>
</dbReference>
<dbReference type="Proteomes" id="UP000001735">
    <property type="component" value="Chromosome"/>
</dbReference>
<dbReference type="GO" id="GO:0051537">
    <property type="term" value="F:2 iron, 2 sulfur cluster binding"/>
    <property type="evidence" value="ECO:0007669"/>
    <property type="project" value="UniProtKB-KW"/>
</dbReference>
<dbReference type="GO" id="GO:0051539">
    <property type="term" value="F:4 iron, 4 sulfur cluster binding"/>
    <property type="evidence" value="ECO:0007669"/>
    <property type="project" value="UniProtKB-KW"/>
</dbReference>
<dbReference type="GO" id="GO:0004076">
    <property type="term" value="F:biotin synthase activity"/>
    <property type="evidence" value="ECO:0007669"/>
    <property type="project" value="UniProtKB-UniRule"/>
</dbReference>
<dbReference type="GO" id="GO:0005506">
    <property type="term" value="F:iron ion binding"/>
    <property type="evidence" value="ECO:0007669"/>
    <property type="project" value="UniProtKB-UniRule"/>
</dbReference>
<dbReference type="GO" id="GO:0009102">
    <property type="term" value="P:biotin biosynthetic process"/>
    <property type="evidence" value="ECO:0007669"/>
    <property type="project" value="UniProtKB-UniRule"/>
</dbReference>
<dbReference type="CDD" id="cd01335">
    <property type="entry name" value="Radical_SAM"/>
    <property type="match status" value="1"/>
</dbReference>
<dbReference type="FunFam" id="3.20.20.70:FF:000158">
    <property type="entry name" value="Biotin synthase"/>
    <property type="match status" value="1"/>
</dbReference>
<dbReference type="Gene3D" id="3.20.20.70">
    <property type="entry name" value="Aldolase class I"/>
    <property type="match status" value="1"/>
</dbReference>
<dbReference type="HAMAP" id="MF_01694">
    <property type="entry name" value="BioB"/>
    <property type="match status" value="1"/>
</dbReference>
<dbReference type="InterPro" id="IPR013785">
    <property type="entry name" value="Aldolase_TIM"/>
</dbReference>
<dbReference type="InterPro" id="IPR010722">
    <property type="entry name" value="BATS_dom"/>
</dbReference>
<dbReference type="InterPro" id="IPR002684">
    <property type="entry name" value="Biotin_synth/BioAB"/>
</dbReference>
<dbReference type="InterPro" id="IPR024177">
    <property type="entry name" value="Biotin_synthase"/>
</dbReference>
<dbReference type="InterPro" id="IPR006638">
    <property type="entry name" value="Elp3/MiaA/NifB-like_rSAM"/>
</dbReference>
<dbReference type="InterPro" id="IPR007197">
    <property type="entry name" value="rSAM"/>
</dbReference>
<dbReference type="NCBIfam" id="TIGR00433">
    <property type="entry name" value="bioB"/>
    <property type="match status" value="1"/>
</dbReference>
<dbReference type="NCBIfam" id="NF006308">
    <property type="entry name" value="PRK08508.1"/>
    <property type="match status" value="1"/>
</dbReference>
<dbReference type="PANTHER" id="PTHR22976">
    <property type="entry name" value="BIOTIN SYNTHASE"/>
    <property type="match status" value="1"/>
</dbReference>
<dbReference type="PANTHER" id="PTHR22976:SF2">
    <property type="entry name" value="BIOTIN SYNTHASE, MITOCHONDRIAL"/>
    <property type="match status" value="1"/>
</dbReference>
<dbReference type="Pfam" id="PF06968">
    <property type="entry name" value="BATS"/>
    <property type="match status" value="1"/>
</dbReference>
<dbReference type="Pfam" id="PF04055">
    <property type="entry name" value="Radical_SAM"/>
    <property type="match status" value="1"/>
</dbReference>
<dbReference type="PIRSF" id="PIRSF001619">
    <property type="entry name" value="Biotin_synth"/>
    <property type="match status" value="1"/>
</dbReference>
<dbReference type="SFLD" id="SFLDG01060">
    <property type="entry name" value="BATS_domain_containing"/>
    <property type="match status" value="1"/>
</dbReference>
<dbReference type="SFLD" id="SFLDG01278">
    <property type="entry name" value="biotin_synthase_like"/>
    <property type="match status" value="1"/>
</dbReference>
<dbReference type="SMART" id="SM00876">
    <property type="entry name" value="BATS"/>
    <property type="match status" value="1"/>
</dbReference>
<dbReference type="SMART" id="SM00729">
    <property type="entry name" value="Elp3"/>
    <property type="match status" value="1"/>
</dbReference>
<dbReference type="SUPFAM" id="SSF102114">
    <property type="entry name" value="Radical SAM enzymes"/>
    <property type="match status" value="1"/>
</dbReference>
<dbReference type="PROSITE" id="PS51918">
    <property type="entry name" value="RADICAL_SAM"/>
    <property type="match status" value="1"/>
</dbReference>
<evidence type="ECO:0000255" key="1">
    <source>
        <dbReference type="HAMAP-Rule" id="MF_01694"/>
    </source>
</evidence>
<evidence type="ECO:0000255" key="2">
    <source>
        <dbReference type="PROSITE-ProRule" id="PRU01266"/>
    </source>
</evidence>
<gene>
    <name evidence="1" type="primary">bioB</name>
    <name type="ordered locus">HPG27_1329</name>
</gene>
<accession>B5Z928</accession>
<organism>
    <name type="scientific">Helicobacter pylori (strain G27)</name>
    <dbReference type="NCBI Taxonomy" id="563041"/>
    <lineage>
        <taxon>Bacteria</taxon>
        <taxon>Pseudomonadati</taxon>
        <taxon>Campylobacterota</taxon>
        <taxon>Epsilonproteobacteria</taxon>
        <taxon>Campylobacterales</taxon>
        <taxon>Helicobacteraceae</taxon>
        <taxon>Helicobacter</taxon>
    </lineage>
</organism>
<proteinExistence type="inferred from homology"/>
<comment type="function">
    <text evidence="1">Catalyzes the conversion of dethiobiotin (DTB) to biotin by the insertion of a sulfur atom into dethiobiotin via a radical-based mechanism.</text>
</comment>
<comment type="catalytic activity">
    <reaction evidence="1">
        <text>(4R,5S)-dethiobiotin + (sulfur carrier)-SH + 2 reduced [2Fe-2S]-[ferredoxin] + 2 S-adenosyl-L-methionine = (sulfur carrier)-H + biotin + 2 5'-deoxyadenosine + 2 L-methionine + 2 oxidized [2Fe-2S]-[ferredoxin]</text>
        <dbReference type="Rhea" id="RHEA:22060"/>
        <dbReference type="Rhea" id="RHEA-COMP:10000"/>
        <dbReference type="Rhea" id="RHEA-COMP:10001"/>
        <dbReference type="Rhea" id="RHEA-COMP:14737"/>
        <dbReference type="Rhea" id="RHEA-COMP:14739"/>
        <dbReference type="ChEBI" id="CHEBI:17319"/>
        <dbReference type="ChEBI" id="CHEBI:29917"/>
        <dbReference type="ChEBI" id="CHEBI:33737"/>
        <dbReference type="ChEBI" id="CHEBI:33738"/>
        <dbReference type="ChEBI" id="CHEBI:57586"/>
        <dbReference type="ChEBI" id="CHEBI:57844"/>
        <dbReference type="ChEBI" id="CHEBI:59789"/>
        <dbReference type="ChEBI" id="CHEBI:64428"/>
        <dbReference type="ChEBI" id="CHEBI:149473"/>
        <dbReference type="EC" id="2.8.1.6"/>
    </reaction>
</comment>
<comment type="cofactor">
    <cofactor evidence="1">
        <name>[4Fe-4S] cluster</name>
        <dbReference type="ChEBI" id="CHEBI:49883"/>
    </cofactor>
    <text evidence="1">Binds 1 [4Fe-4S] cluster. The cluster is coordinated with 3 cysteines and an exchangeable S-adenosyl-L-methionine.</text>
</comment>
<comment type="cofactor">
    <cofactor evidence="1">
        <name>[2Fe-2S] cluster</name>
        <dbReference type="ChEBI" id="CHEBI:190135"/>
    </cofactor>
    <text evidence="1">Binds 1 [2Fe-2S] cluster. The cluster is coordinated with 3 cysteines and 1 arginine.</text>
</comment>
<comment type="pathway">
    <text evidence="1">Cofactor biosynthesis; biotin biosynthesis; biotin from 7,8-diaminononanoate: step 2/2.</text>
</comment>
<comment type="subunit">
    <text evidence="1">Homodimer.</text>
</comment>
<comment type="similarity">
    <text evidence="1">Belongs to the radical SAM superfamily. Biotin synthase family.</text>
</comment>
<feature type="chain" id="PRO_0000381426" description="Biotin synthase">
    <location>
        <begin position="1"/>
        <end position="282"/>
    </location>
</feature>
<feature type="domain" description="Radical SAM core" evidence="2">
    <location>
        <begin position="1"/>
        <end position="228"/>
    </location>
</feature>
<feature type="binding site" evidence="1">
    <location>
        <position position="17"/>
    </location>
    <ligand>
        <name>[4Fe-4S] cluster</name>
        <dbReference type="ChEBI" id="CHEBI:49883"/>
        <note>4Fe-4S-S-AdoMet</note>
    </ligand>
</feature>
<feature type="binding site" evidence="1">
    <location>
        <position position="21"/>
    </location>
    <ligand>
        <name>[4Fe-4S] cluster</name>
        <dbReference type="ChEBI" id="CHEBI:49883"/>
        <note>4Fe-4S-S-AdoMet</note>
    </ligand>
</feature>
<feature type="binding site" evidence="1">
    <location>
        <position position="24"/>
    </location>
    <ligand>
        <name>[4Fe-4S] cluster</name>
        <dbReference type="ChEBI" id="CHEBI:49883"/>
        <note>4Fe-4S-S-AdoMet</note>
    </ligand>
</feature>
<feature type="binding site" evidence="1">
    <location>
        <position position="61"/>
    </location>
    <ligand>
        <name>[2Fe-2S] cluster</name>
        <dbReference type="ChEBI" id="CHEBI:190135"/>
    </ligand>
</feature>
<feature type="binding site" evidence="1">
    <location>
        <position position="96"/>
    </location>
    <ligand>
        <name>[2Fe-2S] cluster</name>
        <dbReference type="ChEBI" id="CHEBI:190135"/>
    </ligand>
</feature>
<feature type="binding site" evidence="1">
    <location>
        <position position="154"/>
    </location>
    <ligand>
        <name>[2Fe-2S] cluster</name>
        <dbReference type="ChEBI" id="CHEBI:190135"/>
    </ligand>
</feature>
<feature type="binding site" evidence="1">
    <location>
        <position position="221"/>
    </location>
    <ligand>
        <name>[2Fe-2S] cluster</name>
        <dbReference type="ChEBI" id="CHEBI:190135"/>
    </ligand>
</feature>
<protein>
    <recommendedName>
        <fullName evidence="1">Biotin synthase</fullName>
        <ecNumber evidence="1">2.8.1.6</ecNumber>
    </recommendedName>
</protein>
<sequence>MQEIFLCSISNVRSGDCKEDCAYCTQSSHHQGAIKRYKFKDEKVVLQEARALRELGALGFCLVTSGRELDDEKCEYIAKLAKAINKEELGLHLIACCGRADLEQLEFLRDAGIHSYNHNLETSQNFFPKICSTHTWEERFITCENALRAGLGLCSGGIFGLNESWEDRIEMLRALASLSPHTTPINFFIKNPVLPIDAETLSADEALECVLLAKEFLPNARLMVAGGREVVFKDNDKKEAKLFEYGINAVVLGDYLTTKGKAPKKDIEKLLSYGLTMATSCH</sequence>
<keyword id="KW-0001">2Fe-2S</keyword>
<keyword id="KW-0004">4Fe-4S</keyword>
<keyword id="KW-0093">Biotin biosynthesis</keyword>
<keyword id="KW-0408">Iron</keyword>
<keyword id="KW-0411">Iron-sulfur</keyword>
<keyword id="KW-0479">Metal-binding</keyword>
<keyword id="KW-1185">Reference proteome</keyword>
<keyword id="KW-0949">S-adenosyl-L-methionine</keyword>
<keyword id="KW-0808">Transferase</keyword>
<reference key="1">
    <citation type="journal article" date="2009" name="J. Bacteriol.">
        <title>The complete genome sequence of Helicobacter pylori strain G27.</title>
        <authorList>
            <person name="Baltrus D.A."/>
            <person name="Amieva M.R."/>
            <person name="Covacci A."/>
            <person name="Lowe T.M."/>
            <person name="Merrell D.S."/>
            <person name="Ottemann K.M."/>
            <person name="Stein M."/>
            <person name="Salama N.R."/>
            <person name="Guillemin K."/>
        </authorList>
    </citation>
    <scope>NUCLEOTIDE SEQUENCE [LARGE SCALE GENOMIC DNA]</scope>
    <source>
        <strain>G27</strain>
    </source>
</reference>
<name>BIOB_HELPG</name>